<organism>
    <name type="scientific">Campylobacter concisus (strain 13826)</name>
    <dbReference type="NCBI Taxonomy" id="360104"/>
    <lineage>
        <taxon>Bacteria</taxon>
        <taxon>Pseudomonadati</taxon>
        <taxon>Campylobacterota</taxon>
        <taxon>Epsilonproteobacteria</taxon>
        <taxon>Campylobacterales</taxon>
        <taxon>Campylobacteraceae</taxon>
        <taxon>Campylobacter</taxon>
    </lineage>
</organism>
<name>NUOK_CAMC1</name>
<accession>A8Z6E7</accession>
<feature type="chain" id="PRO_0000390003" description="NADH-quinone oxidoreductase subunit K">
    <location>
        <begin position="1"/>
        <end position="100"/>
    </location>
</feature>
<feature type="transmembrane region" description="Helical" evidence="1">
    <location>
        <begin position="2"/>
        <end position="22"/>
    </location>
</feature>
<feature type="transmembrane region" description="Helical" evidence="1">
    <location>
        <begin position="29"/>
        <end position="49"/>
    </location>
</feature>
<feature type="transmembrane region" description="Helical" evidence="1">
    <location>
        <begin position="60"/>
        <end position="80"/>
    </location>
</feature>
<reference key="1">
    <citation type="submission" date="2007-10" db="EMBL/GenBank/DDBJ databases">
        <title>Genome sequence of Campylobacter concisus 13826 isolated from human feces.</title>
        <authorList>
            <person name="Fouts D.E."/>
            <person name="Mongodin E.F."/>
            <person name="Puiu D."/>
            <person name="Sebastian Y."/>
            <person name="Miller W.G."/>
            <person name="Mandrell R.E."/>
            <person name="On S."/>
            <person name="Nelson K.E."/>
        </authorList>
    </citation>
    <scope>NUCLEOTIDE SEQUENCE [LARGE SCALE GENOMIC DNA]</scope>
    <source>
        <strain>13826</strain>
    </source>
</reference>
<comment type="function">
    <text evidence="1">NDH-1 shuttles electrons from NADH, via FMN and iron-sulfur (Fe-S) centers, to quinones in the respiratory chain. The immediate electron acceptor for the enzyme in this species is believed to be ubiquinone. Couples the redox reaction to proton translocation (for every two electrons transferred, four hydrogen ions are translocated across the cytoplasmic membrane), and thus conserves the redox energy in a proton gradient.</text>
</comment>
<comment type="catalytic activity">
    <reaction evidence="1">
        <text>a quinone + NADH + 5 H(+)(in) = a quinol + NAD(+) + 4 H(+)(out)</text>
        <dbReference type="Rhea" id="RHEA:57888"/>
        <dbReference type="ChEBI" id="CHEBI:15378"/>
        <dbReference type="ChEBI" id="CHEBI:24646"/>
        <dbReference type="ChEBI" id="CHEBI:57540"/>
        <dbReference type="ChEBI" id="CHEBI:57945"/>
        <dbReference type="ChEBI" id="CHEBI:132124"/>
    </reaction>
</comment>
<comment type="subunit">
    <text evidence="1">NDH-1 is composed of 14 different subunits. Subunits NuoA, H, J, K, L, M, N constitute the membrane sector of the complex.</text>
</comment>
<comment type="subcellular location">
    <subcellularLocation>
        <location evidence="1">Cell inner membrane</location>
        <topology evidence="1">Multi-pass membrane protein</topology>
    </subcellularLocation>
</comment>
<comment type="similarity">
    <text evidence="1">Belongs to the complex I subunit 4L family.</text>
</comment>
<proteinExistence type="inferred from homology"/>
<gene>
    <name evidence="1" type="primary">nuoK</name>
    <name type="ordered locus">Ccon26_01950</name>
    <name type="ORF">CCC13826_1666</name>
</gene>
<protein>
    <recommendedName>
        <fullName evidence="1">NADH-quinone oxidoreductase subunit K</fullName>
        <ecNumber evidence="1">7.1.1.-</ecNumber>
    </recommendedName>
    <alternativeName>
        <fullName evidence="1">NADH dehydrogenase I subunit K</fullName>
    </alternativeName>
    <alternativeName>
        <fullName evidence="1">NDH-1 subunit K</fullName>
    </alternativeName>
</protein>
<keyword id="KW-0997">Cell inner membrane</keyword>
<keyword id="KW-1003">Cell membrane</keyword>
<keyword id="KW-0472">Membrane</keyword>
<keyword id="KW-0520">NAD</keyword>
<keyword id="KW-0874">Quinone</keyword>
<keyword id="KW-1278">Translocase</keyword>
<keyword id="KW-0812">Transmembrane</keyword>
<keyword id="KW-1133">Transmembrane helix</keyword>
<keyword id="KW-0813">Transport</keyword>
<keyword id="KW-0830">Ubiquinone</keyword>
<dbReference type="EC" id="7.1.1.-" evidence="1"/>
<dbReference type="EMBL" id="CP000792">
    <property type="protein sequence ID" value="ABW74728.1"/>
    <property type="molecule type" value="Genomic_DNA"/>
</dbReference>
<dbReference type="RefSeq" id="WP_004317991.1">
    <property type="nucleotide sequence ID" value="NC_009802.2"/>
</dbReference>
<dbReference type="SMR" id="A8Z6E7"/>
<dbReference type="STRING" id="360104.CCC13826_1666"/>
<dbReference type="GeneID" id="28661874"/>
<dbReference type="KEGG" id="cco:CCC13826_1666"/>
<dbReference type="eggNOG" id="COG0713">
    <property type="taxonomic scope" value="Bacteria"/>
</dbReference>
<dbReference type="HOGENOM" id="CLU_144724_0_0_7"/>
<dbReference type="OrthoDB" id="9810120at2"/>
<dbReference type="Proteomes" id="UP000001121">
    <property type="component" value="Chromosome"/>
</dbReference>
<dbReference type="GO" id="GO:0030964">
    <property type="term" value="C:NADH dehydrogenase complex"/>
    <property type="evidence" value="ECO:0007669"/>
    <property type="project" value="TreeGrafter"/>
</dbReference>
<dbReference type="GO" id="GO:0005886">
    <property type="term" value="C:plasma membrane"/>
    <property type="evidence" value="ECO:0007669"/>
    <property type="project" value="UniProtKB-SubCell"/>
</dbReference>
<dbReference type="GO" id="GO:0050136">
    <property type="term" value="F:NADH:ubiquinone reductase (non-electrogenic) activity"/>
    <property type="evidence" value="ECO:0007669"/>
    <property type="project" value="UniProtKB-UniRule"/>
</dbReference>
<dbReference type="GO" id="GO:0048038">
    <property type="term" value="F:quinone binding"/>
    <property type="evidence" value="ECO:0007669"/>
    <property type="project" value="UniProtKB-KW"/>
</dbReference>
<dbReference type="GO" id="GO:0042773">
    <property type="term" value="P:ATP synthesis coupled electron transport"/>
    <property type="evidence" value="ECO:0007669"/>
    <property type="project" value="InterPro"/>
</dbReference>
<dbReference type="FunFam" id="1.10.287.3510:FF:000001">
    <property type="entry name" value="NADH-quinone oxidoreductase subunit K"/>
    <property type="match status" value="1"/>
</dbReference>
<dbReference type="Gene3D" id="1.10.287.3510">
    <property type="match status" value="1"/>
</dbReference>
<dbReference type="HAMAP" id="MF_01456">
    <property type="entry name" value="NDH1_NuoK"/>
    <property type="match status" value="1"/>
</dbReference>
<dbReference type="InterPro" id="IPR001133">
    <property type="entry name" value="NADH_UbQ_OxRdtase_chain4L/K"/>
</dbReference>
<dbReference type="InterPro" id="IPR039428">
    <property type="entry name" value="NUOK/Mnh_C1-like"/>
</dbReference>
<dbReference type="NCBIfam" id="NF004320">
    <property type="entry name" value="PRK05715.1-2"/>
    <property type="match status" value="1"/>
</dbReference>
<dbReference type="NCBIfam" id="NF004323">
    <property type="entry name" value="PRK05715.1-5"/>
    <property type="match status" value="1"/>
</dbReference>
<dbReference type="PANTHER" id="PTHR11434:SF21">
    <property type="entry name" value="NADH DEHYDROGENASE SUBUNIT 4L-RELATED"/>
    <property type="match status" value="1"/>
</dbReference>
<dbReference type="PANTHER" id="PTHR11434">
    <property type="entry name" value="NADH-UBIQUINONE OXIDOREDUCTASE SUBUNIT ND4L"/>
    <property type="match status" value="1"/>
</dbReference>
<dbReference type="Pfam" id="PF00420">
    <property type="entry name" value="Oxidored_q2"/>
    <property type="match status" value="1"/>
</dbReference>
<sequence>MIGLTHYLILASLVFVIGLVGIMRRRNLIMLFFSSEILLNSANIALAAISKYYFDLTGQIIAFFIVAIAASEVAVGLGLLVLWYKKTGSISLDSMTNMKG</sequence>
<evidence type="ECO:0000255" key="1">
    <source>
        <dbReference type="HAMAP-Rule" id="MF_01456"/>
    </source>
</evidence>